<organism>
    <name type="scientific">Homo sapiens</name>
    <name type="common">Human</name>
    <dbReference type="NCBI Taxonomy" id="9606"/>
    <lineage>
        <taxon>Eukaryota</taxon>
        <taxon>Metazoa</taxon>
        <taxon>Chordata</taxon>
        <taxon>Craniata</taxon>
        <taxon>Vertebrata</taxon>
        <taxon>Euteleostomi</taxon>
        <taxon>Mammalia</taxon>
        <taxon>Eutheria</taxon>
        <taxon>Euarchontoglires</taxon>
        <taxon>Primates</taxon>
        <taxon>Haplorrhini</taxon>
        <taxon>Catarrhini</taxon>
        <taxon>Hominidae</taxon>
        <taxon>Homo</taxon>
    </lineage>
</organism>
<dbReference type="EMBL" id="X74511">
    <property type="protein sequence ID" value="CAA52617.1"/>
    <property type="molecule type" value="mRNA"/>
</dbReference>
<dbReference type="EMBL" id="Z48051">
    <property type="protein sequence ID" value="CAA88109.1"/>
    <property type="molecule type" value="Genomic_DNA"/>
</dbReference>
<dbReference type="EMBL" id="U18840">
    <property type="protein sequence ID" value="AAC50361.1"/>
    <property type="molecule type" value="mRNA"/>
</dbReference>
<dbReference type="EMBL" id="U18843">
    <property type="protein sequence ID" value="AAC50362.1"/>
    <property type="molecule type" value="mRNA"/>
</dbReference>
<dbReference type="EMBL" id="U18798">
    <property type="protein sequence ID" value="AAC50876.1"/>
    <property type="molecule type" value="mRNA"/>
</dbReference>
<dbReference type="EMBL" id="U18799">
    <property type="protein sequence ID" value="AAC50877.1"/>
    <property type="molecule type" value="mRNA"/>
</dbReference>
<dbReference type="EMBL" id="U18800">
    <property type="protein sequence ID" value="AAB36870.1"/>
    <property type="molecule type" value="mRNA"/>
</dbReference>
<dbReference type="EMBL" id="U18801">
    <property type="protein sequence ID" value="AAC50878.1"/>
    <property type="molecule type" value="mRNA"/>
</dbReference>
<dbReference type="EMBL" id="U18803">
    <property type="protein sequence ID" value="AAC50879.1"/>
    <property type="molecule type" value="mRNA"/>
</dbReference>
<dbReference type="EMBL" id="U64564">
    <property type="protein sequence ID" value="AAB08088.1"/>
    <property type="molecule type" value="mRNA"/>
</dbReference>
<dbReference type="EMBL" id="U64565">
    <property type="protein sequence ID" value="AAB08089.1"/>
    <property type="molecule type" value="mRNA"/>
</dbReference>
<dbReference type="EMBL" id="U64566">
    <property type="protein sequence ID" value="AAB08090.1"/>
    <property type="molecule type" value="mRNA"/>
</dbReference>
<dbReference type="EMBL" id="U64567">
    <property type="protein sequence ID" value="AAB08091.1"/>
    <property type="molecule type" value="mRNA"/>
</dbReference>
<dbReference type="EMBL" id="U64568">
    <property type="protein sequence ID" value="AAB08092.1"/>
    <property type="molecule type" value="mRNA"/>
</dbReference>
<dbReference type="EMBL" id="U64569">
    <property type="protein sequence ID" value="AAB08093.1"/>
    <property type="molecule type" value="mRNA"/>
</dbReference>
<dbReference type="EMBL" id="U64570">
    <property type="protein sequence ID" value="AAB08094.1"/>
    <property type="molecule type" value="mRNA"/>
</dbReference>
<dbReference type="EMBL" id="U64571">
    <property type="protein sequence ID" value="AAB08095.1"/>
    <property type="molecule type" value="mRNA"/>
</dbReference>
<dbReference type="EMBL" id="AK312892">
    <property type="protein sequence ID" value="BAG35739.1"/>
    <property type="molecule type" value="mRNA"/>
</dbReference>
<dbReference type="EMBL" id="AL050328">
    <property type="protein sequence ID" value="CAB89267.1"/>
    <property type="molecule type" value="Genomic_DNA"/>
</dbReference>
<dbReference type="EMBL" id="AL050328">
    <property type="protein sequence ID" value="CAB89268.1"/>
    <property type="molecule type" value="Genomic_DNA"/>
</dbReference>
<dbReference type="EMBL" id="AL050328">
    <property type="protein sequence ID" value="CAB89269.1"/>
    <property type="molecule type" value="Genomic_DNA"/>
</dbReference>
<dbReference type="EMBL" id="AL050328">
    <property type="protein sequence ID" value="CAB89270.1"/>
    <property type="molecule type" value="Genomic_DNA"/>
</dbReference>
<dbReference type="EMBL" id="AL050328">
    <property type="protein sequence ID" value="CAB89271.1"/>
    <property type="molecule type" value="Genomic_DNA"/>
</dbReference>
<dbReference type="EMBL" id="AL645936">
    <property type="status" value="NOT_ANNOTATED_CDS"/>
    <property type="molecule type" value="Genomic_DNA"/>
</dbReference>
<dbReference type="EMBL" id="AL662826">
    <property type="status" value="NOT_ANNOTATED_CDS"/>
    <property type="molecule type" value="Genomic_DNA"/>
</dbReference>
<dbReference type="EMBL" id="AL669813">
    <property type="status" value="NOT_ANNOTATED_CDS"/>
    <property type="molecule type" value="Genomic_DNA"/>
</dbReference>
<dbReference type="EMBL" id="AL929591">
    <property type="status" value="NOT_ANNOTATED_CDS"/>
    <property type="molecule type" value="Genomic_DNA"/>
</dbReference>
<dbReference type="EMBL" id="BX120002">
    <property type="status" value="NOT_ANNOTATED_CDS"/>
    <property type="molecule type" value="Genomic_DNA"/>
</dbReference>
<dbReference type="EMBL" id="BX927250">
    <property type="status" value="NOT_ANNOTATED_CDS"/>
    <property type="molecule type" value="Genomic_DNA"/>
</dbReference>
<dbReference type="EMBL" id="CR388408">
    <property type="status" value="NOT_ANNOTATED_CDS"/>
    <property type="molecule type" value="Genomic_DNA"/>
</dbReference>
<dbReference type="EMBL" id="CR759766">
    <property type="status" value="NOT_ANNOTATED_CDS"/>
    <property type="molecule type" value="Genomic_DNA"/>
</dbReference>
<dbReference type="EMBL" id="CR936483">
    <property type="status" value="NOT_ANNOTATED_CDS"/>
    <property type="molecule type" value="Genomic_DNA"/>
</dbReference>
<dbReference type="EMBL" id="CH471081">
    <property type="protein sequence ID" value="EAX03213.1"/>
    <property type="molecule type" value="Genomic_DNA"/>
</dbReference>
<dbReference type="EMBL" id="CH471081">
    <property type="protein sequence ID" value="EAX03214.1"/>
    <property type="molecule type" value="Genomic_DNA"/>
</dbReference>
<dbReference type="EMBL" id="CH471081">
    <property type="protein sequence ID" value="EAX03216.1"/>
    <property type="molecule type" value="Genomic_DNA"/>
</dbReference>
<dbReference type="EMBL" id="CH471081">
    <property type="protein sequence ID" value="EAX03217.1"/>
    <property type="molecule type" value="Genomic_DNA"/>
</dbReference>
<dbReference type="EMBL" id="BC035938">
    <property type="protein sequence ID" value="AAH35938.1"/>
    <property type="molecule type" value="mRNA"/>
</dbReference>
<dbReference type="EMBL" id="AY566847">
    <property type="protein sequence ID" value="AAU09338.1"/>
    <property type="molecule type" value="mRNA"/>
</dbReference>
<dbReference type="EMBL" id="AY566853">
    <property type="protein sequence ID" value="AAU09343.1"/>
    <property type="molecule type" value="mRNA"/>
</dbReference>
<dbReference type="CCDS" id="CCDS34366.1">
    <molecule id="Q16653-7"/>
</dbReference>
<dbReference type="CCDS" id="CCDS34367.1">
    <molecule id="Q16653-6"/>
</dbReference>
<dbReference type="CCDS" id="CCDS34368.1">
    <molecule id="Q16653-11"/>
</dbReference>
<dbReference type="CCDS" id="CCDS34369.1">
    <molecule id="Q16653-3"/>
</dbReference>
<dbReference type="CCDS" id="CCDS34370.1">
    <molecule id="Q16653-1"/>
</dbReference>
<dbReference type="CCDS" id="CCDS4667.1">
    <molecule id="Q16653-5"/>
</dbReference>
<dbReference type="CCDS" id="CCDS47394.1">
    <molecule id="Q16653-2"/>
</dbReference>
<dbReference type="CCDS" id="CCDS47395.2">
    <molecule id="Q16653-4"/>
</dbReference>
<dbReference type="CCDS" id="CCDS54977.1">
    <molecule id="Q16653-12"/>
</dbReference>
<dbReference type="CCDS" id="CCDS87379.1">
    <molecule id="Q16653-13"/>
</dbReference>
<dbReference type="PIR" id="S58394">
    <property type="entry name" value="S58394"/>
</dbReference>
<dbReference type="RefSeq" id="NP_001008229.1">
    <molecule id="Q16653-3"/>
    <property type="nucleotide sequence ID" value="NM_001008228.3"/>
</dbReference>
<dbReference type="RefSeq" id="NP_001008230.1">
    <molecule id="Q16653-11"/>
    <property type="nucleotide sequence ID" value="NM_001008229.3"/>
</dbReference>
<dbReference type="RefSeq" id="NP_001163889.1">
    <molecule id="Q16653-12"/>
    <property type="nucleotide sequence ID" value="NM_001170418.2"/>
</dbReference>
<dbReference type="RefSeq" id="NP_001350539.1">
    <molecule id="Q16653-13"/>
    <property type="nucleotide sequence ID" value="NM_001363610.2"/>
</dbReference>
<dbReference type="RefSeq" id="NP_002424.3">
    <molecule id="Q16653-5"/>
    <property type="nucleotide sequence ID" value="NM_002433.4"/>
</dbReference>
<dbReference type="RefSeq" id="NP_996532.2">
    <molecule id="Q16653-1"/>
    <property type="nucleotide sequence ID" value="NM_206809.4"/>
</dbReference>
<dbReference type="RefSeq" id="NP_996533.2">
    <molecule id="Q16653-6"/>
    <property type="nucleotide sequence ID" value="NM_206810.4"/>
</dbReference>
<dbReference type="RefSeq" id="NP_996534.2">
    <molecule id="Q16653-7"/>
    <property type="nucleotide sequence ID" value="NM_206811.4"/>
</dbReference>
<dbReference type="RefSeq" id="NP_996535.2">
    <molecule id="Q16653-2"/>
    <property type="nucleotide sequence ID" value="NM_206812.4"/>
</dbReference>
<dbReference type="RefSeq" id="NP_996537.3">
    <molecule id="Q16653-4"/>
    <property type="nucleotide sequence ID" value="NM_206814.6"/>
</dbReference>
<dbReference type="RefSeq" id="XP_005249188.1">
    <property type="nucleotide sequence ID" value="XM_005249131.3"/>
</dbReference>
<dbReference type="SMR" id="Q16653"/>
<dbReference type="BioGRID" id="110482">
    <property type="interactions" value="24"/>
</dbReference>
<dbReference type="FunCoup" id="Q16653">
    <property type="interactions" value="578"/>
</dbReference>
<dbReference type="IntAct" id="Q16653">
    <property type="interactions" value="19"/>
</dbReference>
<dbReference type="MINT" id="Q16653"/>
<dbReference type="STRING" id="9606.ENSP00000366091"/>
<dbReference type="GlyCosmos" id="Q16653">
    <property type="glycosylation" value="1 site, No reported glycans"/>
</dbReference>
<dbReference type="GlyGen" id="Q16653">
    <property type="glycosylation" value="1 site"/>
</dbReference>
<dbReference type="iPTMnet" id="Q16653"/>
<dbReference type="PhosphoSitePlus" id="Q16653"/>
<dbReference type="SwissPalm" id="Q16653"/>
<dbReference type="BioMuta" id="MOG"/>
<dbReference type="DMDM" id="317373391"/>
<dbReference type="MassIVE" id="Q16653"/>
<dbReference type="PaxDb" id="9606-ENSP00000366095"/>
<dbReference type="PeptideAtlas" id="Q16653"/>
<dbReference type="ProteomicsDB" id="20308"/>
<dbReference type="ProteomicsDB" id="30306"/>
<dbReference type="ProteomicsDB" id="61003">
    <molecule id="Q16653-1"/>
</dbReference>
<dbReference type="ProteomicsDB" id="61004">
    <molecule id="Q16653-10"/>
</dbReference>
<dbReference type="ProteomicsDB" id="61005">
    <molecule id="Q16653-2"/>
</dbReference>
<dbReference type="ProteomicsDB" id="61006">
    <molecule id="Q16653-3"/>
</dbReference>
<dbReference type="ProteomicsDB" id="61007">
    <molecule id="Q16653-4"/>
</dbReference>
<dbReference type="ProteomicsDB" id="61008">
    <molecule id="Q16653-5"/>
</dbReference>
<dbReference type="ProteomicsDB" id="61009">
    <molecule id="Q16653-6"/>
</dbReference>
<dbReference type="ProteomicsDB" id="61010">
    <molecule id="Q16653-7"/>
</dbReference>
<dbReference type="ProteomicsDB" id="61011">
    <molecule id="Q16653-8"/>
</dbReference>
<dbReference type="ProteomicsDB" id="61012">
    <molecule id="Q16653-9"/>
</dbReference>
<dbReference type="ProteomicsDB" id="63907"/>
<dbReference type="ProteomicsDB" id="63921"/>
<dbReference type="ProteomicsDB" id="71170"/>
<dbReference type="Antibodypedia" id="44829">
    <property type="antibodies" value="414 antibodies from 42 providers"/>
</dbReference>
<dbReference type="DNASU" id="4340"/>
<dbReference type="Ensembl" id="ENST00000259891.11">
    <property type="protein sequence ID" value="ENSP00000259891.7"/>
    <property type="gene ID" value="ENSG00000137345.19"/>
</dbReference>
<dbReference type="Ensembl" id="ENST00000359539.7">
    <property type="protein sequence ID" value="ENSP00000352534.3"/>
    <property type="gene ID" value="ENSG00000137345.19"/>
</dbReference>
<dbReference type="Ensembl" id="ENST00000376888.6">
    <molecule id="Q16653-4"/>
    <property type="protein sequence ID" value="ENSP00000366085.2"/>
    <property type="gene ID" value="ENSG00000204655.12"/>
</dbReference>
<dbReference type="Ensembl" id="ENST00000376891.8">
    <molecule id="Q16653-11"/>
    <property type="protein sequence ID" value="ENSP00000366088.4"/>
    <property type="gene ID" value="ENSG00000204655.12"/>
</dbReference>
<dbReference type="Ensembl" id="ENST00000376894.8">
    <molecule id="Q16653-13"/>
    <property type="protein sequence ID" value="ENSP00000366091.4"/>
    <property type="gene ID" value="ENSG00000204655.12"/>
</dbReference>
<dbReference type="Ensembl" id="ENST00000376898.7">
    <molecule id="Q16653-5"/>
    <property type="protein sequence ID" value="ENSP00000366095.3"/>
    <property type="gene ID" value="ENSG00000204655.12"/>
</dbReference>
<dbReference type="Ensembl" id="ENST00000376917.8">
    <molecule id="Q16653-1"/>
    <property type="protein sequence ID" value="ENSP00000366115.3"/>
    <property type="gene ID" value="ENSG00000204655.12"/>
</dbReference>
<dbReference type="Ensembl" id="ENST00000383521.6">
    <property type="protein sequence ID" value="ENSP00000373013.2"/>
    <property type="gene ID" value="ENSG00000237834.9"/>
</dbReference>
<dbReference type="Ensembl" id="ENST00000383525.7">
    <property type="protein sequence ID" value="ENSP00000373017.3"/>
    <property type="gene ID" value="ENSG00000237834.9"/>
</dbReference>
<dbReference type="Ensembl" id="ENST00000383630.7">
    <property type="protein sequence ID" value="ENSP00000373126.3"/>
    <property type="gene ID" value="ENSG00000137345.19"/>
</dbReference>
<dbReference type="Ensembl" id="ENST00000383631.6">
    <property type="protein sequence ID" value="ENSP00000373127.2"/>
    <property type="gene ID" value="ENSG00000137345.19"/>
</dbReference>
<dbReference type="Ensembl" id="ENST00000396701.6">
    <molecule id="Q16653-6"/>
    <property type="protein sequence ID" value="ENSP00000379929.2"/>
    <property type="gene ID" value="ENSG00000204655.12"/>
</dbReference>
<dbReference type="Ensembl" id="ENST00000396704.7">
    <molecule id="Q16653-3"/>
    <property type="protein sequence ID" value="ENSP00000379932.3"/>
    <property type="gene ID" value="ENSG00000204655.12"/>
</dbReference>
<dbReference type="Ensembl" id="ENST00000400669.5">
    <property type="protein sequence ID" value="ENSP00000383510.1"/>
    <property type="gene ID" value="ENSG00000237834.9"/>
</dbReference>
<dbReference type="Ensembl" id="ENST00000400671.5">
    <property type="protein sequence ID" value="ENSP00000383512.1"/>
    <property type="gene ID" value="ENSG00000237834.9"/>
</dbReference>
<dbReference type="Ensembl" id="ENST00000400688.5">
    <property type="protein sequence ID" value="ENSP00000383526.1"/>
    <property type="gene ID" value="ENSG00000137345.19"/>
</dbReference>
<dbReference type="Ensembl" id="ENST00000400691.6">
    <property type="protein sequence ID" value="ENSP00000383528.2"/>
    <property type="gene ID" value="ENSG00000137345.19"/>
</dbReference>
<dbReference type="Ensembl" id="ENST00000412760.6">
    <property type="protein sequence ID" value="ENSP00000404245.2"/>
    <property type="gene ID" value="ENSG00000237834.9"/>
</dbReference>
<dbReference type="Ensembl" id="ENST00000414889.6">
    <property type="protein sequence ID" value="ENSP00000403380.2"/>
    <property type="gene ID" value="ENSG00000234623.9"/>
</dbReference>
<dbReference type="Ensembl" id="ENST00000415546.6">
    <property type="protein sequence ID" value="ENSP00000404149.2"/>
    <property type="gene ID" value="ENSG00000234096.9"/>
</dbReference>
<dbReference type="Ensembl" id="ENST00000417019.6">
    <property type="protein sequence ID" value="ENSP00000404537.2"/>
    <property type="gene ID" value="ENSG00000234096.9"/>
</dbReference>
<dbReference type="Ensembl" id="ENST00000419274.5">
    <property type="protein sequence ID" value="ENSP00000411489.1"/>
    <property type="gene ID" value="ENSG00000236561.9"/>
</dbReference>
<dbReference type="Ensembl" id="ENST00000419309.6">
    <property type="protein sequence ID" value="ENSP00000395005.2"/>
    <property type="gene ID" value="ENSG00000236561.9"/>
</dbReference>
<dbReference type="Ensembl" id="ENST00000420045.5">
    <property type="protein sequence ID" value="ENSP00000390682.1"/>
    <property type="gene ID" value="ENSG00000234096.9"/>
</dbReference>
<dbReference type="Ensembl" id="ENST00000423895.6">
    <property type="protein sequence ID" value="ENSP00000390632.2"/>
    <property type="gene ID" value="ENSG00000230885.9"/>
</dbReference>
<dbReference type="Ensembl" id="ENST00000425145.6">
    <property type="protein sequence ID" value="ENSP00000397101.2"/>
    <property type="gene ID" value="ENSG00000234623.9"/>
</dbReference>
<dbReference type="Ensembl" id="ENST00000426782.5">
    <property type="protein sequence ID" value="ENSP00000410699.1"/>
    <property type="gene ID" value="ENSG00000230885.9"/>
</dbReference>
<dbReference type="Ensembl" id="ENST00000427289.6">
    <property type="protein sequence ID" value="ENSP00000414489.2"/>
    <property type="gene ID" value="ENSG00000230885.9"/>
</dbReference>
<dbReference type="Ensembl" id="ENST00000428719.5">
    <property type="protein sequence ID" value="ENSP00000397723.1"/>
    <property type="gene ID" value="ENSG00000234096.9"/>
</dbReference>
<dbReference type="Ensembl" id="ENST00000430264.5">
    <property type="protein sequence ID" value="ENSP00000403058.1"/>
    <property type="gene ID" value="ENSG00000234623.9"/>
</dbReference>
<dbReference type="Ensembl" id="ENST00000430351.5">
    <property type="protein sequence ID" value="ENSP00000410268.1"/>
    <property type="gene ID" value="ENSG00000234096.9"/>
</dbReference>
<dbReference type="Ensembl" id="ENST00000431798.6">
    <molecule id="Q16653-2"/>
    <property type="protein sequence ID" value="ENSP00000410866.2"/>
    <property type="gene ID" value="ENSG00000204655.12"/>
</dbReference>
<dbReference type="Ensembl" id="ENST00000432271.6">
    <property type="protein sequence ID" value="ENSP00000389221.2"/>
    <property type="gene ID" value="ENSG00000234623.9"/>
</dbReference>
<dbReference type="Ensembl" id="ENST00000433500.5">
    <property type="protein sequence ID" value="ENSP00000413364.1"/>
    <property type="gene ID" value="ENSG00000236561.9"/>
</dbReference>
<dbReference type="Ensembl" id="ENST00000434177.5">
    <property type="protein sequence ID" value="ENSP00000398197.1"/>
    <property type="gene ID" value="ENSG00000234623.9"/>
</dbReference>
<dbReference type="Ensembl" id="ENST00000438803.6">
    <property type="protein sequence ID" value="ENSP00000414862.2"/>
    <property type="gene ID" value="ENSG00000236561.9"/>
</dbReference>
<dbReference type="Ensembl" id="ENST00000439634.5">
    <property type="protein sequence ID" value="ENSP00000404957.1"/>
    <property type="gene ID" value="ENSG00000234096.9"/>
</dbReference>
<dbReference type="Ensembl" id="ENST00000439884.6">
    <property type="protein sequence ID" value="ENSP00000398394.2"/>
    <property type="gene ID" value="ENSG00000237834.9"/>
</dbReference>
<dbReference type="Ensembl" id="ENST00000440561.5">
    <property type="protein sequence ID" value="ENSP00000409534.1"/>
    <property type="gene ID" value="ENSG00000230885.9"/>
</dbReference>
<dbReference type="Ensembl" id="ENST00000442244.5">
    <property type="protein sequence ID" value="ENSP00000391516.1"/>
    <property type="gene ID" value="ENSG00000236561.9"/>
</dbReference>
<dbReference type="Ensembl" id="ENST00000442444.6">
    <property type="protein sequence ID" value="ENSP00000414146.2"/>
    <property type="gene ID" value="ENSG00000137345.19"/>
</dbReference>
<dbReference type="Ensembl" id="ENST00000442629.5">
    <property type="protein sequence ID" value="ENSP00000399240.1"/>
    <property type="gene ID" value="ENSG00000234623.9"/>
</dbReference>
<dbReference type="Ensembl" id="ENST00000444674.6">
    <property type="protein sequence ID" value="ENSP00000390469.2"/>
    <property type="gene ID" value="ENSG00000230885.9"/>
</dbReference>
<dbReference type="Ensembl" id="ENST00000447285.6">
    <property type="protein sequence ID" value="ENSP00000401609.2"/>
    <property type="gene ID" value="ENSG00000236561.9"/>
</dbReference>
<dbReference type="Ensembl" id="ENST00000448816.5">
    <property type="protein sequence ID" value="ENSP00000397837.1"/>
    <property type="gene ID" value="ENSG00000237834.9"/>
</dbReference>
<dbReference type="Ensembl" id="ENST00000449096.6">
    <property type="protein sequence ID" value="ENSP00000391898.2"/>
    <property type="gene ID" value="ENSG00000234096.9"/>
</dbReference>
<dbReference type="Ensembl" id="ENST00000452233.5">
    <property type="protein sequence ID" value="ENSP00000394873.1"/>
    <property type="gene ID" value="ENSG00000234623.9"/>
</dbReference>
<dbReference type="Ensembl" id="ENST00000452744.6">
    <property type="protein sequence ID" value="ENSP00000389022.2"/>
    <property type="gene ID" value="ENSG00000232641.10"/>
</dbReference>
<dbReference type="Ensembl" id="ENST00000457090.5">
    <property type="protein sequence ID" value="ENSP00000415883.1"/>
    <property type="gene ID" value="ENSG00000236561.9"/>
</dbReference>
<dbReference type="Ensembl" id="ENST00000457626.5">
    <property type="protein sequence ID" value="ENSP00000402139.1"/>
    <property type="gene ID" value="ENSG00000230885.9"/>
</dbReference>
<dbReference type="Ensembl" id="ENST00000458179.5">
    <property type="protein sequence ID" value="ENSP00000413370.1"/>
    <property type="gene ID" value="ENSG00000230885.9"/>
</dbReference>
<dbReference type="Ensembl" id="ENST00000490427.5">
    <molecule id="Q16653-12"/>
    <property type="protein sequence ID" value="ENSP00000420350.1"/>
    <property type="gene ID" value="ENSG00000204655.12"/>
</dbReference>
<dbReference type="Ensembl" id="ENST00000494692.5">
    <molecule id="Q16653-7"/>
    <property type="protein sequence ID" value="ENSP00000417405.1"/>
    <property type="gene ID" value="ENSG00000204655.12"/>
</dbReference>
<dbReference type="Ensembl" id="ENST00000547083.1">
    <property type="protein sequence ID" value="ENSP00000449213.1"/>
    <property type="gene ID" value="ENSG00000137345.19"/>
</dbReference>
<dbReference type="Ensembl" id="ENST00000548017.1">
    <property type="protein sequence ID" value="ENSP00000448732.1"/>
    <property type="gene ID" value="ENSG00000234096.9"/>
</dbReference>
<dbReference type="Ensembl" id="ENST00000550849.1">
    <property type="protein sequence ID" value="ENSP00000449683.1"/>
    <property type="gene ID" value="ENSG00000237834.9"/>
</dbReference>
<dbReference type="Ensembl" id="ENST00000551175.1">
    <property type="protein sequence ID" value="ENSP00000448879.1"/>
    <property type="gene ID" value="ENSG00000234623.9"/>
</dbReference>
<dbReference type="Ensembl" id="ENST00000551993.1">
    <property type="protein sequence ID" value="ENSP00000446871.1"/>
    <property type="gene ID" value="ENSG00000230885.9"/>
</dbReference>
<dbReference type="Ensembl" id="ENST00000553111.1">
    <property type="protein sequence ID" value="ENSP00000447099.1"/>
    <property type="gene ID" value="ENSG00000236561.9"/>
</dbReference>
<dbReference type="GeneID" id="4340"/>
<dbReference type="KEGG" id="hsa:4340"/>
<dbReference type="MANE-Select" id="ENST00000376917.8">
    <property type="protein sequence ID" value="ENSP00000366115.3"/>
    <property type="RefSeq nucleotide sequence ID" value="NM_206809.4"/>
    <property type="RefSeq protein sequence ID" value="NP_996532.2"/>
</dbReference>
<dbReference type="UCSC" id="uc003nmy.3">
    <molecule id="Q16653-1"/>
    <property type="organism name" value="human"/>
</dbReference>
<dbReference type="AGR" id="HGNC:7197"/>
<dbReference type="CTD" id="4340"/>
<dbReference type="DisGeNET" id="4340"/>
<dbReference type="GeneCards" id="MOG"/>
<dbReference type="HGNC" id="HGNC:7197">
    <property type="gene designation" value="MOG"/>
</dbReference>
<dbReference type="HPA" id="ENSG00000204655">
    <property type="expression patterns" value="Tissue enriched (brain)"/>
</dbReference>
<dbReference type="MalaCards" id="MOG"/>
<dbReference type="MIM" id="159465">
    <property type="type" value="gene"/>
</dbReference>
<dbReference type="MIM" id="614250">
    <property type="type" value="phenotype"/>
</dbReference>
<dbReference type="neXtProt" id="NX_Q16653"/>
<dbReference type="OpenTargets" id="ENSG00000204655"/>
<dbReference type="Orphanet" id="2073">
    <property type="disease" value="Narcolepsy type 1"/>
</dbReference>
<dbReference type="PharmGKB" id="PA30905"/>
<dbReference type="VEuPathDB" id="HostDB:ENSG00000204655"/>
<dbReference type="eggNOG" id="ENOG502SQC1">
    <property type="taxonomic scope" value="Eukaryota"/>
</dbReference>
<dbReference type="GeneTree" id="ENSGT00940000153527"/>
<dbReference type="HOGENOM" id="CLU_2196027_0_0_1"/>
<dbReference type="InParanoid" id="Q16653"/>
<dbReference type="OMA" id="PCWKVAL"/>
<dbReference type="OrthoDB" id="9049620at2759"/>
<dbReference type="PAN-GO" id="Q16653">
    <property type="GO annotations" value="4 GO annotations based on evolutionary models"/>
</dbReference>
<dbReference type="PhylomeDB" id="Q16653"/>
<dbReference type="TreeFam" id="TF331083"/>
<dbReference type="PathwayCommons" id="Q16653"/>
<dbReference type="SignaLink" id="Q16653"/>
<dbReference type="SIGNOR" id="Q16653"/>
<dbReference type="BioGRID-ORCS" id="4340">
    <property type="hits" value="227 hits in 1146 CRISPR screens"/>
</dbReference>
<dbReference type="CD-CODE" id="FB4E32DD">
    <property type="entry name" value="Presynaptic clusters and postsynaptic densities"/>
</dbReference>
<dbReference type="ChiTaRS" id="MOG">
    <property type="organism name" value="human"/>
</dbReference>
<dbReference type="GeneWiki" id="Myelin_oligodendrocyte_glycoprotein"/>
<dbReference type="GenomeRNAi" id="4340"/>
<dbReference type="Pharos" id="Q16653">
    <property type="development level" value="Tbio"/>
</dbReference>
<dbReference type="PRO" id="PR:Q16653"/>
<dbReference type="Proteomes" id="UP000005640">
    <property type="component" value="Chromosome 6"/>
</dbReference>
<dbReference type="RNAct" id="Q16653">
    <property type="molecule type" value="protein"/>
</dbReference>
<dbReference type="Bgee" id="ENSG00000137345">
    <property type="expression patterns" value="Expressed in collection of basal ganglia and 4 other cell types or tissues"/>
</dbReference>
<dbReference type="ExpressionAtlas" id="Q16653">
    <property type="expression patterns" value="baseline and differential"/>
</dbReference>
<dbReference type="GO" id="GO:0009897">
    <property type="term" value="C:external side of plasma membrane"/>
    <property type="evidence" value="ECO:0000318"/>
    <property type="project" value="GO_Central"/>
</dbReference>
<dbReference type="GO" id="GO:0005886">
    <property type="term" value="C:plasma membrane"/>
    <property type="evidence" value="ECO:0000303"/>
    <property type="project" value="ProtInc"/>
</dbReference>
<dbReference type="GO" id="GO:0005102">
    <property type="term" value="F:signaling receptor binding"/>
    <property type="evidence" value="ECO:0000318"/>
    <property type="project" value="GO_Central"/>
</dbReference>
<dbReference type="GO" id="GO:0001618">
    <property type="term" value="F:virus receptor activity"/>
    <property type="evidence" value="ECO:0007669"/>
    <property type="project" value="UniProtKB-KW"/>
</dbReference>
<dbReference type="GO" id="GO:0007155">
    <property type="term" value="P:cell adhesion"/>
    <property type="evidence" value="ECO:0007669"/>
    <property type="project" value="UniProtKB-KW"/>
</dbReference>
<dbReference type="GO" id="GO:0007417">
    <property type="term" value="P:central nervous system development"/>
    <property type="evidence" value="ECO:0000304"/>
    <property type="project" value="ProtInc"/>
</dbReference>
<dbReference type="GO" id="GO:0001817">
    <property type="term" value="P:regulation of cytokine production"/>
    <property type="evidence" value="ECO:0000318"/>
    <property type="project" value="GO_Central"/>
</dbReference>
<dbReference type="GO" id="GO:0050852">
    <property type="term" value="P:T cell receptor signaling pathway"/>
    <property type="evidence" value="ECO:0000318"/>
    <property type="project" value="GO_Central"/>
</dbReference>
<dbReference type="CDD" id="cd05713">
    <property type="entry name" value="IgV_MOG_like"/>
    <property type="match status" value="1"/>
</dbReference>
<dbReference type="FunFam" id="2.60.40.10:FF:000183">
    <property type="entry name" value="Myelin-oligodendrocyte glycoprotein"/>
    <property type="match status" value="1"/>
</dbReference>
<dbReference type="Gene3D" id="2.60.40.10">
    <property type="entry name" value="Immunoglobulins"/>
    <property type="match status" value="1"/>
</dbReference>
<dbReference type="InterPro" id="IPR007110">
    <property type="entry name" value="Ig-like_dom"/>
</dbReference>
<dbReference type="InterPro" id="IPR036179">
    <property type="entry name" value="Ig-like_dom_sf"/>
</dbReference>
<dbReference type="InterPro" id="IPR013783">
    <property type="entry name" value="Ig-like_fold"/>
</dbReference>
<dbReference type="InterPro" id="IPR003599">
    <property type="entry name" value="Ig_sub"/>
</dbReference>
<dbReference type="InterPro" id="IPR013106">
    <property type="entry name" value="Ig_V-set"/>
</dbReference>
<dbReference type="InterPro" id="IPR050504">
    <property type="entry name" value="IgSF_BTN/MOG"/>
</dbReference>
<dbReference type="InterPro" id="IPR016663">
    <property type="entry name" value="Myelin-oligodendrocyte_glycop"/>
</dbReference>
<dbReference type="PANTHER" id="PTHR24100">
    <property type="entry name" value="BUTYROPHILIN"/>
    <property type="match status" value="1"/>
</dbReference>
<dbReference type="PANTHER" id="PTHR24100:SF71">
    <property type="entry name" value="MYELIN-OLIGODENDROCYTE GLYCOPROTEIN"/>
    <property type="match status" value="1"/>
</dbReference>
<dbReference type="Pfam" id="PF07686">
    <property type="entry name" value="V-set"/>
    <property type="match status" value="1"/>
</dbReference>
<dbReference type="PIRSF" id="PIRSF016522">
    <property type="entry name" value="MOG"/>
    <property type="match status" value="1"/>
</dbReference>
<dbReference type="SMART" id="SM00409">
    <property type="entry name" value="IG"/>
    <property type="match status" value="1"/>
</dbReference>
<dbReference type="SMART" id="SM00406">
    <property type="entry name" value="IGv"/>
    <property type="match status" value="1"/>
</dbReference>
<dbReference type="SUPFAM" id="SSF48726">
    <property type="entry name" value="Immunoglobulin"/>
    <property type="match status" value="1"/>
</dbReference>
<dbReference type="PROSITE" id="PS50835">
    <property type="entry name" value="IG_LIKE"/>
    <property type="match status" value="1"/>
</dbReference>
<feature type="signal peptide" evidence="2">
    <location>
        <begin position="1"/>
        <end position="29"/>
    </location>
</feature>
<feature type="chain" id="PRO_0000014888" description="Myelin-oligodendrocyte glycoprotein">
    <location>
        <begin position="30"/>
        <end position="247"/>
    </location>
</feature>
<feature type="topological domain" description="Extracellular" evidence="2">
    <location>
        <begin position="30"/>
        <end position="154"/>
    </location>
</feature>
<feature type="transmembrane region" description="Helical" evidence="2">
    <location>
        <begin position="155"/>
        <end position="175"/>
    </location>
</feature>
<feature type="topological domain" description="Cytoplasmic" evidence="2">
    <location>
        <begin position="176"/>
        <end position="210"/>
    </location>
</feature>
<feature type="transmembrane region" description="Helical" evidence="2">
    <location>
        <begin position="211"/>
        <end position="231"/>
    </location>
</feature>
<feature type="topological domain" description="Extracellular" evidence="2">
    <location>
        <begin position="232"/>
        <end position="247"/>
    </location>
</feature>
<feature type="domain" description="Ig-like V-type">
    <location>
        <begin position="32"/>
        <end position="145"/>
    </location>
</feature>
<feature type="glycosylation site" description="N-linked (GlcNAc...) asparagine" evidence="2">
    <location>
        <position position="60"/>
    </location>
</feature>
<feature type="disulfide bond" evidence="3">
    <location>
        <begin position="53"/>
        <end position="127"/>
    </location>
</feature>
<feature type="splice variant" id="VSP_002539" description="In isoform 4 and isoform 12." evidence="18">
    <location>
        <begin position="30"/>
        <end position="145"/>
    </location>
</feature>
<feature type="splice variant" id="VSP_040344" description="In isoform 10." evidence="17">
    <original>DPFYWVSPGVLVLLAVLPVLLLQITV</original>
    <variation>VSHSVTQDWLQWHDHGSLQPPPPRLK</variation>
    <location>
        <begin position="146"/>
        <end position="171"/>
    </location>
</feature>
<feature type="splice variant" id="VSP_040345" description="In isoform 10." evidence="17">
    <location>
        <begin position="172"/>
        <end position="247"/>
    </location>
</feature>
<feature type="splice variant" id="VSP_046856" description="In isoform 11." evidence="18">
    <original>DPHFLRVPCWKITLFVIVPVLGPLVALIICYNWLHRRLAGQFLEELRNPF</original>
    <variation>VFHLEALSG</variation>
    <location>
        <begin position="198"/>
        <end position="247"/>
    </location>
</feature>
<feature type="splice variant" id="VSP_002544" description="In isoform 8." evidence="19">
    <location>
        <begin position="198"/>
        <end position="243"/>
    </location>
</feature>
<feature type="splice variant" id="VSP_002543" description="In isoform 2 and isoform 6." evidence="19">
    <location>
        <begin position="198"/>
        <end position="236"/>
    </location>
</feature>
<feature type="splice variant" id="VSP_002542" description="In isoform 3, isoform 7 and isoform 12." evidence="18">
    <original>DPHFLRVPCWKITLFVIVPVLGPLVALIICYNWLHRRLA</original>
    <variation>ESFGVLGPQVKEPKKT</variation>
    <location>
        <begin position="198"/>
        <end position="236"/>
    </location>
</feature>
<feature type="splice variant" id="VSP_002540" description="In isoform 9." evidence="19">
    <original>DPHFLR</original>
    <variation>GKFRHV</variation>
    <location>
        <begin position="198"/>
        <end position="203"/>
    </location>
</feature>
<feature type="splice variant" id="VSP_002541" description="In isoform 9." evidence="19">
    <location>
        <begin position="204"/>
        <end position="247"/>
    </location>
</feature>
<feature type="splice variant" id="VSP_002545" description="In isoform 5, isoform 6, isoform 7 and isoform 8." evidence="19">
    <original>RNPF</original>
    <variation>LFHLEALSG</variation>
    <location>
        <begin position="244"/>
        <end position="247"/>
    </location>
</feature>
<feature type="splice variant" id="VSP_055600" description="In isoform 13." evidence="16">
    <original>NPF</original>
    <variation>KFSSLCYKQRIKSQERETEATRGRGGLLRDHIPRGKEELESLGGGKTPPGR</variation>
    <location>
        <begin position="245"/>
        <end position="247"/>
    </location>
</feature>
<feature type="sequence variant" id="VAR_066415" description="In NRCLP7; dbSNP:rs387906655." evidence="8">
    <original>S</original>
    <variation>C</variation>
    <location>
        <position position="133"/>
    </location>
</feature>
<feature type="sequence variant" id="VAR_056056" description="In dbSNP:rs2857766." evidence="4 11">
    <original>V</original>
    <variation>L</variation>
    <location>
        <position position="171"/>
    </location>
</feature>
<feature type="sequence variant" id="VAR_060215" description="In dbSNP:rs3130253." evidence="4 5 6 9 10 11 12 13 14 15">
    <original>I</original>
    <variation>V</variation>
    <location>
        <position position="174"/>
    </location>
</feature>
<name>MOG_HUMAN</name>
<reference key="1">
    <citation type="journal article" date="1995" name="J. Neurochem.">
        <title>Characterization of cDNA and genomic clones encoding human myelin oligodendrocyte glycoprotein.</title>
        <authorList>
            <person name="Hilton A.A."/>
            <person name="Slavin A.J."/>
            <person name="Hilton D.J."/>
            <person name="Bernard C.C.A."/>
        </authorList>
    </citation>
    <scope>NUCLEOTIDE SEQUENCE [MRNA]</scope>
    <scope>ALTERNATIVE SPLICING</scope>
    <scope>VARIANT VAL-174</scope>
</reference>
<reference key="2">
    <citation type="journal article" date="1994" name="J. Neurochem.">
        <title>Characterization and expression of the cDNA coding for the human myelin/oligodendrocyte glycoprotein.</title>
        <authorList>
            <person name="Pham-Dinh D."/>
            <person name="Allinquant B."/>
            <person name="Ruberg M."/>
            <person name="della Gaspera B."/>
            <person name="Nussbaum J.-L."/>
            <person name="Dautigny A."/>
        </authorList>
    </citation>
    <scope>NUCLEOTIDE SEQUENCE [MRNA]</scope>
    <scope>VARIANT VAL-174</scope>
    <source>
        <tissue>Brain</tissue>
    </source>
</reference>
<reference key="3">
    <citation type="journal article" date="1995" name="Genomics">
        <title>The human myelin oligodendrocyte glycoprotein (MOG) gene: complete nucleotide sequence and structural characterization.</title>
        <authorList>
            <person name="Roth M.-P."/>
            <person name="Malfroy L."/>
            <person name="Offer C."/>
            <person name="Sevin J."/>
            <person name="Enault G."/>
            <person name="Borot N."/>
            <person name="Pontarotti P."/>
            <person name="Coppin H."/>
        </authorList>
    </citation>
    <scope>NUCLEOTIDE SEQUENCE [GENOMIC DNA]</scope>
    <scope>VARIANTS LEU-171 AND VAL-174</scope>
</reference>
<reference key="4">
    <citation type="journal article" date="1995" name="Genomics">
        <title>Structure of the human myelin/oligodendrocyte glycoprotein gene and multiple alternative spliced isoforms.</title>
        <authorList>
            <person name="Pham-Dinh D."/>
            <person name="Della Gaspera B."/>
            <person name="de Rosbo N.K."/>
            <person name="Dautigny A."/>
        </authorList>
    </citation>
    <scope>NUCLEOTIDE SEQUENCE [MRNA]</scope>
    <scope>ALTERNATIVE SPLICING</scope>
    <scope>VARIANT VAL-174</scope>
</reference>
<reference key="5">
    <citation type="journal article" date="1996" name="J. Neurosci. Res.">
        <title>Myelin/oligodendrocyte glycoprotein is alternatively spliced in humans but not mice.</title>
        <authorList>
            <person name="Ballenthin P.A."/>
            <person name="Gardinier M.V."/>
        </authorList>
    </citation>
    <scope>NUCLEOTIDE SEQUENCE [MRNA]</scope>
    <scope>ALTERNATIVE SPLICING</scope>
    <scope>NUCLEOTIDE SEQUENCE [MRNA] OF 30-247 (ISOFORM 10)</scope>
    <scope>VARIANT VAL-174</scope>
</reference>
<reference key="6">
    <citation type="journal article" date="2004" name="Nat. Genet.">
        <title>Complete sequencing and characterization of 21,243 full-length human cDNAs.</title>
        <authorList>
            <person name="Ota T."/>
            <person name="Suzuki Y."/>
            <person name="Nishikawa T."/>
            <person name="Otsuki T."/>
            <person name="Sugiyama T."/>
            <person name="Irie R."/>
            <person name="Wakamatsu A."/>
            <person name="Hayashi K."/>
            <person name="Sato H."/>
            <person name="Nagai K."/>
            <person name="Kimura K."/>
            <person name="Makita H."/>
            <person name="Sekine M."/>
            <person name="Obayashi M."/>
            <person name="Nishi T."/>
            <person name="Shibahara T."/>
            <person name="Tanaka T."/>
            <person name="Ishii S."/>
            <person name="Yamamoto J."/>
            <person name="Saito K."/>
            <person name="Kawai Y."/>
            <person name="Isono Y."/>
            <person name="Nakamura Y."/>
            <person name="Nagahari K."/>
            <person name="Murakami K."/>
            <person name="Yasuda T."/>
            <person name="Iwayanagi T."/>
            <person name="Wagatsuma M."/>
            <person name="Shiratori A."/>
            <person name="Sudo H."/>
            <person name="Hosoiri T."/>
            <person name="Kaku Y."/>
            <person name="Kodaira H."/>
            <person name="Kondo H."/>
            <person name="Sugawara M."/>
            <person name="Takahashi M."/>
            <person name="Kanda K."/>
            <person name="Yokoi T."/>
            <person name="Furuya T."/>
            <person name="Kikkawa E."/>
            <person name="Omura Y."/>
            <person name="Abe K."/>
            <person name="Kamihara K."/>
            <person name="Katsuta N."/>
            <person name="Sato K."/>
            <person name="Tanikawa M."/>
            <person name="Yamazaki M."/>
            <person name="Ninomiya K."/>
            <person name="Ishibashi T."/>
            <person name="Yamashita H."/>
            <person name="Murakawa K."/>
            <person name="Fujimori K."/>
            <person name="Tanai H."/>
            <person name="Kimata M."/>
            <person name="Watanabe M."/>
            <person name="Hiraoka S."/>
            <person name="Chiba Y."/>
            <person name="Ishida S."/>
            <person name="Ono Y."/>
            <person name="Takiguchi S."/>
            <person name="Watanabe S."/>
            <person name="Yosida M."/>
            <person name="Hotuta T."/>
            <person name="Kusano J."/>
            <person name="Kanehori K."/>
            <person name="Takahashi-Fujii A."/>
            <person name="Hara H."/>
            <person name="Tanase T.-O."/>
            <person name="Nomura Y."/>
            <person name="Togiya S."/>
            <person name="Komai F."/>
            <person name="Hara R."/>
            <person name="Takeuchi K."/>
            <person name="Arita M."/>
            <person name="Imose N."/>
            <person name="Musashino K."/>
            <person name="Yuuki H."/>
            <person name="Oshima A."/>
            <person name="Sasaki N."/>
            <person name="Aotsuka S."/>
            <person name="Yoshikawa Y."/>
            <person name="Matsunawa H."/>
            <person name="Ichihara T."/>
            <person name="Shiohata N."/>
            <person name="Sano S."/>
            <person name="Moriya S."/>
            <person name="Momiyama H."/>
            <person name="Satoh N."/>
            <person name="Takami S."/>
            <person name="Terashima Y."/>
            <person name="Suzuki O."/>
            <person name="Nakagawa S."/>
            <person name="Senoh A."/>
            <person name="Mizoguchi H."/>
            <person name="Goto Y."/>
            <person name="Shimizu F."/>
            <person name="Wakebe H."/>
            <person name="Hishigaki H."/>
            <person name="Watanabe T."/>
            <person name="Sugiyama A."/>
            <person name="Takemoto M."/>
            <person name="Kawakami B."/>
            <person name="Yamazaki M."/>
            <person name="Watanabe K."/>
            <person name="Kumagai A."/>
            <person name="Itakura S."/>
            <person name="Fukuzumi Y."/>
            <person name="Fujimori Y."/>
            <person name="Komiyama M."/>
            <person name="Tashiro H."/>
            <person name="Tanigami A."/>
            <person name="Fujiwara T."/>
            <person name="Ono T."/>
            <person name="Yamada K."/>
            <person name="Fujii Y."/>
            <person name="Ozaki K."/>
            <person name="Hirao M."/>
            <person name="Ohmori Y."/>
            <person name="Kawabata A."/>
            <person name="Hikiji T."/>
            <person name="Kobatake N."/>
            <person name="Inagaki H."/>
            <person name="Ikema Y."/>
            <person name="Okamoto S."/>
            <person name="Okitani R."/>
            <person name="Kawakami T."/>
            <person name="Noguchi S."/>
            <person name="Itoh T."/>
            <person name="Shigeta K."/>
            <person name="Senba T."/>
            <person name="Matsumura K."/>
            <person name="Nakajima Y."/>
            <person name="Mizuno T."/>
            <person name="Morinaga M."/>
            <person name="Sasaki M."/>
            <person name="Togashi T."/>
            <person name="Oyama M."/>
            <person name="Hata H."/>
            <person name="Watanabe M."/>
            <person name="Komatsu T."/>
            <person name="Mizushima-Sugano J."/>
            <person name="Satoh T."/>
            <person name="Shirai Y."/>
            <person name="Takahashi Y."/>
            <person name="Nakagawa K."/>
            <person name="Okumura K."/>
            <person name="Nagase T."/>
            <person name="Nomura N."/>
            <person name="Kikuchi H."/>
            <person name="Masuho Y."/>
            <person name="Yamashita R."/>
            <person name="Nakai K."/>
            <person name="Yada T."/>
            <person name="Nakamura Y."/>
            <person name="Ohara O."/>
            <person name="Isogai T."/>
            <person name="Sugano S."/>
        </authorList>
    </citation>
    <scope>NUCLEOTIDE SEQUENCE [LARGE SCALE MRNA] (ISOFORM 1)</scope>
    <scope>VARIANT VAL-174</scope>
    <source>
        <tissue>Brain cortex</tissue>
    </source>
</reference>
<reference key="7">
    <citation type="journal article" date="2003" name="Nature">
        <title>The DNA sequence and analysis of human chromosome 6.</title>
        <authorList>
            <person name="Mungall A.J."/>
            <person name="Palmer S.A."/>
            <person name="Sims S.K."/>
            <person name="Edwards C.A."/>
            <person name="Ashurst J.L."/>
            <person name="Wilming L."/>
            <person name="Jones M.C."/>
            <person name="Horton R."/>
            <person name="Hunt S.E."/>
            <person name="Scott C.E."/>
            <person name="Gilbert J.G.R."/>
            <person name="Clamp M.E."/>
            <person name="Bethel G."/>
            <person name="Milne S."/>
            <person name="Ainscough R."/>
            <person name="Almeida J.P."/>
            <person name="Ambrose K.D."/>
            <person name="Andrews T.D."/>
            <person name="Ashwell R.I.S."/>
            <person name="Babbage A.K."/>
            <person name="Bagguley C.L."/>
            <person name="Bailey J."/>
            <person name="Banerjee R."/>
            <person name="Barker D.J."/>
            <person name="Barlow K.F."/>
            <person name="Bates K."/>
            <person name="Beare D.M."/>
            <person name="Beasley H."/>
            <person name="Beasley O."/>
            <person name="Bird C.P."/>
            <person name="Blakey S.E."/>
            <person name="Bray-Allen S."/>
            <person name="Brook J."/>
            <person name="Brown A.J."/>
            <person name="Brown J.Y."/>
            <person name="Burford D.C."/>
            <person name="Burrill W."/>
            <person name="Burton J."/>
            <person name="Carder C."/>
            <person name="Carter N.P."/>
            <person name="Chapman J.C."/>
            <person name="Clark S.Y."/>
            <person name="Clark G."/>
            <person name="Clee C.M."/>
            <person name="Clegg S."/>
            <person name="Cobley V."/>
            <person name="Collier R.E."/>
            <person name="Collins J.E."/>
            <person name="Colman L.K."/>
            <person name="Corby N.R."/>
            <person name="Coville G.J."/>
            <person name="Culley K.M."/>
            <person name="Dhami P."/>
            <person name="Davies J."/>
            <person name="Dunn M."/>
            <person name="Earthrowl M.E."/>
            <person name="Ellington A.E."/>
            <person name="Evans K.A."/>
            <person name="Faulkner L."/>
            <person name="Francis M.D."/>
            <person name="Frankish A."/>
            <person name="Frankland J."/>
            <person name="French L."/>
            <person name="Garner P."/>
            <person name="Garnett J."/>
            <person name="Ghori M.J."/>
            <person name="Gilby L.M."/>
            <person name="Gillson C.J."/>
            <person name="Glithero R.J."/>
            <person name="Grafham D.V."/>
            <person name="Grant M."/>
            <person name="Gribble S."/>
            <person name="Griffiths C."/>
            <person name="Griffiths M.N.D."/>
            <person name="Hall R."/>
            <person name="Halls K.S."/>
            <person name="Hammond S."/>
            <person name="Harley J.L."/>
            <person name="Hart E.A."/>
            <person name="Heath P.D."/>
            <person name="Heathcott R."/>
            <person name="Holmes S.J."/>
            <person name="Howden P.J."/>
            <person name="Howe K.L."/>
            <person name="Howell G.R."/>
            <person name="Huckle E."/>
            <person name="Humphray S.J."/>
            <person name="Humphries M.D."/>
            <person name="Hunt A.R."/>
            <person name="Johnson C.M."/>
            <person name="Joy A.A."/>
            <person name="Kay M."/>
            <person name="Keenan S.J."/>
            <person name="Kimberley A.M."/>
            <person name="King A."/>
            <person name="Laird G.K."/>
            <person name="Langford C."/>
            <person name="Lawlor S."/>
            <person name="Leongamornlert D.A."/>
            <person name="Leversha M."/>
            <person name="Lloyd C.R."/>
            <person name="Lloyd D.M."/>
            <person name="Loveland J.E."/>
            <person name="Lovell J."/>
            <person name="Martin S."/>
            <person name="Mashreghi-Mohammadi M."/>
            <person name="Maslen G.L."/>
            <person name="Matthews L."/>
            <person name="McCann O.T."/>
            <person name="McLaren S.J."/>
            <person name="McLay K."/>
            <person name="McMurray A."/>
            <person name="Moore M.J.F."/>
            <person name="Mullikin J.C."/>
            <person name="Niblett D."/>
            <person name="Nickerson T."/>
            <person name="Novik K.L."/>
            <person name="Oliver K."/>
            <person name="Overton-Larty E.K."/>
            <person name="Parker A."/>
            <person name="Patel R."/>
            <person name="Pearce A.V."/>
            <person name="Peck A.I."/>
            <person name="Phillimore B.J.C.T."/>
            <person name="Phillips S."/>
            <person name="Plumb R.W."/>
            <person name="Porter K.M."/>
            <person name="Ramsey Y."/>
            <person name="Ranby S.A."/>
            <person name="Rice C.M."/>
            <person name="Ross M.T."/>
            <person name="Searle S.M."/>
            <person name="Sehra H.K."/>
            <person name="Sheridan E."/>
            <person name="Skuce C.D."/>
            <person name="Smith S."/>
            <person name="Smith M."/>
            <person name="Spraggon L."/>
            <person name="Squares S.L."/>
            <person name="Steward C.A."/>
            <person name="Sycamore N."/>
            <person name="Tamlyn-Hall G."/>
            <person name="Tester J."/>
            <person name="Theaker A.J."/>
            <person name="Thomas D.W."/>
            <person name="Thorpe A."/>
            <person name="Tracey A."/>
            <person name="Tromans A."/>
            <person name="Tubby B."/>
            <person name="Wall M."/>
            <person name="Wallis J.M."/>
            <person name="West A.P."/>
            <person name="White S.S."/>
            <person name="Whitehead S.L."/>
            <person name="Whittaker H."/>
            <person name="Wild A."/>
            <person name="Willey D.J."/>
            <person name="Wilmer T.E."/>
            <person name="Wood J.M."/>
            <person name="Wray P.W."/>
            <person name="Wyatt J.C."/>
            <person name="Young L."/>
            <person name="Younger R.M."/>
            <person name="Bentley D.R."/>
            <person name="Coulson A."/>
            <person name="Durbin R.M."/>
            <person name="Hubbard T."/>
            <person name="Sulston J.E."/>
            <person name="Dunham I."/>
            <person name="Rogers J."/>
            <person name="Beck S."/>
        </authorList>
    </citation>
    <scope>NUCLEOTIDE SEQUENCE [LARGE SCALE GENOMIC DNA]</scope>
    <scope>VARIANTS LEU-171 AND VAL-174</scope>
</reference>
<reference key="8">
    <citation type="submission" date="2005-07" db="EMBL/GenBank/DDBJ databases">
        <authorList>
            <person name="Mural R.J."/>
            <person name="Istrail S."/>
            <person name="Sutton G.G."/>
            <person name="Florea L."/>
            <person name="Halpern A.L."/>
            <person name="Mobarry C.M."/>
            <person name="Lippert R."/>
            <person name="Walenz B."/>
            <person name="Shatkay H."/>
            <person name="Dew I."/>
            <person name="Miller J.R."/>
            <person name="Flanigan M.J."/>
            <person name="Edwards N.J."/>
            <person name="Bolanos R."/>
            <person name="Fasulo D."/>
            <person name="Halldorsson B.V."/>
            <person name="Hannenhalli S."/>
            <person name="Turner R."/>
            <person name="Yooseph S."/>
            <person name="Lu F."/>
            <person name="Nusskern D.R."/>
            <person name="Shue B.C."/>
            <person name="Zheng X.H."/>
            <person name="Zhong F."/>
            <person name="Delcher A.L."/>
            <person name="Huson D.H."/>
            <person name="Kravitz S.A."/>
            <person name="Mouchard L."/>
            <person name="Reinert K."/>
            <person name="Remington K.A."/>
            <person name="Clark A.G."/>
            <person name="Waterman M.S."/>
            <person name="Eichler E.E."/>
            <person name="Adams M.D."/>
            <person name="Hunkapiller M.W."/>
            <person name="Myers E.W."/>
            <person name="Venter J.C."/>
        </authorList>
    </citation>
    <scope>NUCLEOTIDE SEQUENCE [LARGE SCALE GENOMIC DNA]</scope>
    <scope>VARIANT VAL-174</scope>
</reference>
<reference key="9">
    <citation type="journal article" date="2004" name="Genome Res.">
        <title>The status, quality, and expansion of the NIH full-length cDNA project: the Mammalian Gene Collection (MGC).</title>
        <authorList>
            <consortium name="The MGC Project Team"/>
        </authorList>
    </citation>
    <scope>NUCLEOTIDE SEQUENCE [LARGE SCALE MRNA] (ISOFORM 13)</scope>
    <scope>VARIANT VAL-174</scope>
    <source>
        <tissue>Brain</tissue>
    </source>
</reference>
<reference key="10">
    <citation type="submission" date="2004-03" db="EMBL/GenBank/DDBJ databases">
        <title>Alternative splicing of the MOG gene across species.</title>
        <authorList>
            <person name="Delarasse C."/>
            <person name="Della Gaspera B."/>
            <person name="Genain C."/>
            <person name="Pham-Dinh D."/>
        </authorList>
    </citation>
    <scope>NUCLEOTIDE SEQUENCE [MRNA] OF 3-206 (ISOFORM 11)</scope>
    <scope>NUCLEOTIDE SEQUENCE [MRNA] OF 3-108 (ISOFORM 12)</scope>
    <scope>ALTERNATIVE SPLICING</scope>
    <scope>VARIANT VAL-174</scope>
</reference>
<reference key="11">
    <citation type="journal article" date="2011" name="J. Virol.">
        <title>Identification of the myelin oligodendrocyte glycoprotein as a cellular receptor for rubella virus.</title>
        <authorList>
            <person name="Cong H."/>
            <person name="Jiang Y."/>
            <person name="Tien P."/>
        </authorList>
    </citation>
    <scope>FUNCTION (MICROBIAL INFECTION)</scope>
    <scope>INTERACTION WITH RUBELLA VIRUS E2 GLYCOPROTEIN</scope>
</reference>
<reference key="12">
    <citation type="journal article" date="1997" name="Eur. J. Biochem.">
        <title>A conformational study of the human and rat encephalitogenic myelin oligodendrocyte glycoprotein peptides 35-55.</title>
        <authorList>
            <person name="Albouz-Abo S."/>
            <person name="Wilson J.C."/>
            <person name="Bernard C.C.A."/>
            <person name="von Itzstein M."/>
        </authorList>
    </citation>
    <scope>STRUCTURE BY NMR OF 64-84</scope>
</reference>
<reference key="13">
    <citation type="journal article" date="2011" name="Am. J. Hum. Genet.">
        <title>A missense mutation in myelin oligodendrocyte glycoprotein as a cause of familial narcolepsy with cataplexy.</title>
        <authorList>
            <person name="Hor H."/>
            <person name="Bartesaghi L."/>
            <person name="Kutalik Z."/>
            <person name="Vicario J.L."/>
            <person name="de Andres C."/>
            <person name="Pfister C."/>
            <person name="Lammers G.J."/>
            <person name="Guex N."/>
            <person name="Chrast R."/>
            <person name="Tafti M."/>
            <person name="Peraita-Adrados R."/>
        </authorList>
    </citation>
    <scope>VARIANT NRCLP7 CYS-133</scope>
</reference>
<accession>Q16653</accession>
<accession>A6NDR4</accession>
<accession>A6NNJ9</accession>
<accession>A8MY31</accession>
<accession>B0UZR9</accession>
<accession>E9PGF0</accession>
<accession>F8W9D5</accession>
<accession>O00713</accession>
<accession>O00714</accession>
<accession>O00715</accession>
<accession>Q13054</accession>
<accession>Q13055</accession>
<accession>Q14855</accession>
<accession>Q29ZN8</accession>
<accession>Q56UY0</accession>
<accession>Q5JNX7</accession>
<accession>Q5JNY1</accession>
<accession>Q5JNY2</accession>
<accession>Q5JNY4</accession>
<accession>Q5SSB5</accession>
<accession>Q5SSB6</accession>
<accession>Q5STL9</accession>
<accession>Q5STM0</accession>
<accession>Q5STM1</accession>
<accession>Q5STM2</accession>
<accession>Q5STM5</accession>
<accession>Q5SUK5</accession>
<accession>Q5SUK7</accession>
<accession>Q5SUK8</accession>
<accession>Q5SUK9</accession>
<accession>Q5SUL0</accession>
<accession>Q5SUL1</accession>
<accession>Q8IYG5</accession>
<accession>Q92891</accession>
<accession>Q92892</accession>
<accession>Q92893</accession>
<accession>Q92894</accession>
<accession>Q92895</accession>
<accession>Q93053</accession>
<accession>Q96KU9</accession>
<accession>Q96KV0</accession>
<accession>Q96KV1</accession>
<accession>Q99605</accession>
<protein>
    <recommendedName>
        <fullName>Myelin-oligodendrocyte glycoprotein</fullName>
    </recommendedName>
</protein>
<proteinExistence type="evidence at protein level"/>
<sequence>MASLSRPSLPSCLCSFLLLLLLQVSSSYAGQFRVIGPRHPIRALVGDEVELPCRISPGKNATGMEVGWYRPPFSRVVHLYRNGKDQDGDQAPEYRGRTELLKDAIGEGKVTLRIRNVRFSDEGGFTCFFRDHSYQEEAAMELKVEDPFYWVSPGVLVLLAVLPVLLLQITVGLIFLCLQYRLRGKLRAEIENLHRTFDPHFLRVPCWKITLFVIVPVLGPLVALIICYNWLHRRLAGQFLEELRNPF</sequence>
<comment type="function">
    <text evidence="1">Mediates homophilic cell-cell adhesion (By similarity). Minor component of the myelin sheath. May be involved in completion and/or maintenance of the myelin sheath and in cell-cell communication.</text>
</comment>
<comment type="function">
    <text evidence="7">(Microbial infection) Acts as a receptor for rubella virus.</text>
</comment>
<comment type="subunit">
    <text evidence="1">Homodimer (By similarity). May form heterodimers between the different isoforms (By similarity).</text>
</comment>
<comment type="subunit">
    <text evidence="7">(Microbial infection) Interacts with rubella virus E2 glycoprotein.</text>
</comment>
<comment type="interaction">
    <interactant intactId="EBI-24226707">
        <id>Q16653-13</id>
    </interactant>
    <interactant intactId="EBI-466029">
        <id>P42858</id>
        <label>HTT</label>
    </interactant>
    <organismsDiffer>false</organismsDiffer>
    <experiments>12</experiments>
</comment>
<comment type="interaction">
    <interactant intactId="EBI-24226707">
        <id>Q16653-13</id>
    </interactant>
    <interactant intactId="EBI-12200293">
        <id>P0DN84</id>
        <label>STRIT1</label>
    </interactant>
    <organismsDiffer>false</organismsDiffer>
    <experiments>3</experiments>
</comment>
<comment type="subcellular location">
    <molecule>Isoform 1</molecule>
    <subcellularLocation>
        <location evidence="19">Cell membrane</location>
        <topology evidence="19">Multi-pass membrane protein</topology>
    </subcellularLocation>
</comment>
<comment type="subcellular location">
    <molecule>Isoform 5</molecule>
    <subcellularLocation>
        <location evidence="19">Cell membrane</location>
        <topology evidence="19">Multi-pass membrane protein</topology>
    </subcellularLocation>
</comment>
<comment type="subcellular location">
    <molecule>Isoform 2</molecule>
    <subcellularLocation>
        <location evidence="19">Cell membrane</location>
        <topology evidence="19">Single-pass type I membrane protein</topology>
    </subcellularLocation>
</comment>
<comment type="subcellular location">
    <molecule>Isoform 3</molecule>
    <subcellularLocation>
        <location evidence="19">Cell membrane</location>
        <topology evidence="19">Single-pass type I membrane protein</topology>
    </subcellularLocation>
</comment>
<comment type="subcellular location">
    <molecule>Isoform 4</molecule>
    <subcellularLocation>
        <location evidence="19">Cell membrane</location>
        <topology evidence="19">Single-pass type I membrane protein</topology>
    </subcellularLocation>
</comment>
<comment type="subcellular location">
    <molecule>Isoform 6</molecule>
    <subcellularLocation>
        <location evidence="19">Cell membrane</location>
        <topology evidence="19">Single-pass type I membrane protein</topology>
    </subcellularLocation>
</comment>
<comment type="subcellular location">
    <molecule>Isoform 7</molecule>
    <subcellularLocation>
        <location evidence="19">Cell membrane</location>
        <topology evidence="19">Single-pass type I membrane protein</topology>
    </subcellularLocation>
</comment>
<comment type="subcellular location">
    <molecule>Isoform 8</molecule>
    <subcellularLocation>
        <location evidence="19">Cell membrane</location>
        <topology evidence="19">Single-pass type I membrane protein</topology>
    </subcellularLocation>
</comment>
<comment type="subcellular location">
    <molecule>Isoform 9</molecule>
    <subcellularLocation>
        <location evidence="19">Cell membrane</location>
        <topology evidence="19">Single-pass type I membrane protein</topology>
    </subcellularLocation>
</comment>
<comment type="alternative products">
    <event type="alternative splicing"/>
    <isoform>
        <id>Q16653-1</id>
        <name>1</name>
        <name>Alpha-1</name>
        <sequence type="displayed"/>
    </isoform>
    <isoform>
        <id>Q16653-2</id>
        <name>2</name>
        <name>Alpha-2</name>
        <sequence type="described" ref="VSP_002543"/>
    </isoform>
    <isoform>
        <id>Q16653-3</id>
        <name>3</name>
        <name>Alpha-3</name>
        <sequence type="described" ref="VSP_002542"/>
    </isoform>
    <isoform>
        <id>Q16653-4</id>
        <name>4</name>
        <name>Alpha-4</name>
        <sequence type="described" ref="VSP_002539"/>
    </isoform>
    <isoform>
        <id>Q16653-5</id>
        <name>5</name>
        <name>Beta-1</name>
        <sequence type="described" ref="VSP_002545"/>
    </isoform>
    <isoform>
        <id>Q16653-6</id>
        <name>6</name>
        <name>Beta-2</name>
        <sequence type="described" ref="VSP_002543 VSP_002545"/>
    </isoform>
    <isoform>
        <id>Q16653-7</id>
        <name>7</name>
        <name>Beta-3</name>
        <sequence type="described" ref="VSP_002542 VSP_002545"/>
    </isoform>
    <isoform>
        <id>Q16653-8</id>
        <name>8</name>
        <name>Beta-4</name>
        <sequence type="described" ref="VSP_002544 VSP_002545"/>
    </isoform>
    <isoform>
        <id>Q16653-9</id>
        <name>9</name>
        <sequence type="described" ref="VSP_002540 VSP_002541"/>
    </isoform>
    <isoform>
        <id>Q16653-10</id>
        <name>10</name>
        <sequence type="described" ref="VSP_040344 VSP_040345"/>
    </isoform>
    <isoform>
        <id>Q16653-11</id>
        <name>11</name>
        <sequence type="described" ref="VSP_046856"/>
    </isoform>
    <isoform>
        <id>Q16653-12</id>
        <name>12</name>
        <sequence type="described" ref="VSP_002539 VSP_002542"/>
    </isoform>
    <isoform>
        <id>Q16653-13</id>
        <name>13</name>
        <name>X1</name>
        <sequence type="described" ref="VSP_055600"/>
    </isoform>
    <text>Additional isoforms seem to exist.</text>
</comment>
<comment type="tissue specificity">
    <text>Found exclusively in the CNS, where it is localized on the surface of myelin and oligodendrocyte cytoplasmic membranes.</text>
</comment>
<comment type="disease" evidence="8">
    <disease id="DI-03240">
        <name>Narcolepsy 7</name>
        <acronym>NRCLP7</acronym>
        <description>Neurological disabling sleep disorder, characterized by excessive daytime sleepiness, sleep fragmentation, symptoms of abnormal rapid-eye-movement (REM) sleep, cataplexy, hypnagogic hallucinations, and sleep paralysis. Cataplexy is a sudden loss of muscle tone triggered by emotions, which is the most valuable clinical feature used to diagnose narcolepsy. Human narcolepsy is primarily a sporadically occurring disorder but familial clustering has been observed.</description>
        <dbReference type="MIM" id="614250"/>
    </disease>
    <text>The disease is caused by variants affecting the gene represented in this entry.</text>
</comment>
<comment type="miscellaneous">
    <molecule>Isoform 9</molecule>
    <text evidence="19">Not functionally active. May be expressed at low level in the adult.</text>
</comment>
<comment type="miscellaneous">
    <molecule>Isoform 10</molecule>
    <text evidence="19">May be produced at very low levels due to a premature stop codon in the mRNA, leading to nonsense-mediated mRNA decay.</text>
</comment>
<comment type="similarity">
    <text evidence="19">Belongs to the immunoglobulin superfamily. BTN/MOG family.</text>
</comment>
<comment type="caution">
    <text evidence="19">Do not confuse myelin-oligodendrocyte glycoprotein (MOG) with oligodendrocyte-myelin glycoprotein (OMG).</text>
</comment>
<comment type="online information" name="Wikipedia">
    <link uri="https://en.wikipedia.org/wiki/Myelin_oligodendrocyte_glycoprotein"/>
    <text>Myelin oligodendrocyte glycoprotein entry</text>
</comment>
<keyword id="KW-0025">Alternative splicing</keyword>
<keyword id="KW-0130">Cell adhesion</keyword>
<keyword id="KW-1003">Cell membrane</keyword>
<keyword id="KW-0225">Disease variant</keyword>
<keyword id="KW-1015">Disulfide bond</keyword>
<keyword id="KW-0325">Glycoprotein</keyword>
<keyword id="KW-1183">Host cell receptor for virus entry</keyword>
<keyword id="KW-0945">Host-virus interaction</keyword>
<keyword id="KW-0393">Immunoglobulin domain</keyword>
<keyword id="KW-0472">Membrane</keyword>
<keyword id="KW-1267">Proteomics identification</keyword>
<keyword id="KW-0675">Receptor</keyword>
<keyword id="KW-1185">Reference proteome</keyword>
<keyword id="KW-0732">Signal</keyword>
<keyword id="KW-0812">Transmembrane</keyword>
<keyword id="KW-1133">Transmembrane helix</keyword>
<evidence type="ECO:0000250" key="1"/>
<evidence type="ECO:0000255" key="2"/>
<evidence type="ECO:0000255" key="3">
    <source>
        <dbReference type="PROSITE-ProRule" id="PRU00114"/>
    </source>
</evidence>
<evidence type="ECO:0000269" key="4">
    <source>
    </source>
</evidence>
<evidence type="ECO:0000269" key="5">
    <source>
    </source>
</evidence>
<evidence type="ECO:0000269" key="6">
    <source>
    </source>
</evidence>
<evidence type="ECO:0000269" key="7">
    <source>
    </source>
</evidence>
<evidence type="ECO:0000269" key="8">
    <source>
    </source>
</evidence>
<evidence type="ECO:0000269" key="9">
    <source>
    </source>
</evidence>
<evidence type="ECO:0000269" key="10">
    <source>
    </source>
</evidence>
<evidence type="ECO:0000269" key="11">
    <source>
    </source>
</evidence>
<evidence type="ECO:0000269" key="12">
    <source>
    </source>
</evidence>
<evidence type="ECO:0000269" key="13">
    <source>
    </source>
</evidence>
<evidence type="ECO:0000269" key="14">
    <source ref="10"/>
</evidence>
<evidence type="ECO:0000269" key="15">
    <source ref="8"/>
</evidence>
<evidence type="ECO:0000303" key="16">
    <source>
    </source>
</evidence>
<evidence type="ECO:0000303" key="17">
    <source>
    </source>
</evidence>
<evidence type="ECO:0000303" key="18">
    <source ref="10"/>
</evidence>
<evidence type="ECO:0000305" key="19"/>
<gene>
    <name type="primary">MOG</name>
</gene>